<protein>
    <recommendedName>
        <fullName evidence="1">NADH-quinone oxidoreductase subunit B</fullName>
        <ecNumber evidence="1">7.1.1.-</ecNumber>
    </recommendedName>
    <alternativeName>
        <fullName evidence="1">NADH dehydrogenase I subunit B</fullName>
    </alternativeName>
    <alternativeName>
        <fullName evidence="1">NDH-1 subunit B</fullName>
    </alternativeName>
</protein>
<comment type="function">
    <text evidence="1">NDH-1 shuttles electrons from NADH, via FMN and iron-sulfur (Fe-S) centers, to quinones in the respiratory chain. The immediate electron acceptor for the enzyme in this species is believed to be ubiquinone. Couples the redox reaction to proton translocation (for every two electrons transferred, four hydrogen ions are translocated across the cytoplasmic membrane), and thus conserves the redox energy in a proton gradient.</text>
</comment>
<comment type="catalytic activity">
    <reaction evidence="1">
        <text>a quinone + NADH + 5 H(+)(in) = a quinol + NAD(+) + 4 H(+)(out)</text>
        <dbReference type="Rhea" id="RHEA:57888"/>
        <dbReference type="ChEBI" id="CHEBI:15378"/>
        <dbReference type="ChEBI" id="CHEBI:24646"/>
        <dbReference type="ChEBI" id="CHEBI:57540"/>
        <dbReference type="ChEBI" id="CHEBI:57945"/>
        <dbReference type="ChEBI" id="CHEBI:132124"/>
    </reaction>
</comment>
<comment type="cofactor">
    <cofactor evidence="1">
        <name>[4Fe-4S] cluster</name>
        <dbReference type="ChEBI" id="CHEBI:49883"/>
    </cofactor>
    <text evidence="1">Binds 1 [4Fe-4S] cluster.</text>
</comment>
<comment type="subunit">
    <text evidence="1">NDH-1 is composed of 14 different subunits. Subunits NuoB, C, D, E, F, and G constitute the peripheral sector of the complex.</text>
</comment>
<comment type="subcellular location">
    <subcellularLocation>
        <location evidence="1">Cell inner membrane</location>
        <topology evidence="1">Peripheral membrane protein</topology>
        <orientation evidence="1">Cytoplasmic side</orientation>
    </subcellularLocation>
</comment>
<comment type="similarity">
    <text evidence="1">Belongs to the complex I 20 kDa subunit family.</text>
</comment>
<evidence type="ECO:0000255" key="1">
    <source>
        <dbReference type="HAMAP-Rule" id="MF_01356"/>
    </source>
</evidence>
<proteinExistence type="inferred from homology"/>
<name>NUOB_WOLWR</name>
<organism>
    <name type="scientific">Wolbachia sp. subsp. Drosophila simulans (strain wRi)</name>
    <dbReference type="NCBI Taxonomy" id="66084"/>
    <lineage>
        <taxon>Bacteria</taxon>
        <taxon>Pseudomonadati</taxon>
        <taxon>Pseudomonadota</taxon>
        <taxon>Alphaproteobacteria</taxon>
        <taxon>Rickettsiales</taxon>
        <taxon>Anaplasmataceae</taxon>
        <taxon>Wolbachieae</taxon>
        <taxon>Wolbachia</taxon>
    </lineage>
</organism>
<sequence length="168" mass="18821">MTNQILSNDDWGRYKKEGFLVTKFGDLTDYVMNWARSGSLWPMTFGLACCAVEMMHTASSRYDLDRYGIMFRASPRQSDVMIVAGTLTNKMAAALRKVYDQMADPKYVISMGSCANGGGYYHYSYSVVRGCDRIVPVDVYVPGCPPTAEALLYGMLCLQNKIKRTRNG</sequence>
<keyword id="KW-0004">4Fe-4S</keyword>
<keyword id="KW-0997">Cell inner membrane</keyword>
<keyword id="KW-1003">Cell membrane</keyword>
<keyword id="KW-0408">Iron</keyword>
<keyword id="KW-0411">Iron-sulfur</keyword>
<keyword id="KW-0472">Membrane</keyword>
<keyword id="KW-0479">Metal-binding</keyword>
<keyword id="KW-0520">NAD</keyword>
<keyword id="KW-0874">Quinone</keyword>
<keyword id="KW-1278">Translocase</keyword>
<keyword id="KW-0813">Transport</keyword>
<keyword id="KW-0830">Ubiquinone</keyword>
<gene>
    <name evidence="1" type="primary">nuoB</name>
    <name type="ordered locus">WRi_012960</name>
</gene>
<dbReference type="EC" id="7.1.1.-" evidence="1"/>
<dbReference type="EMBL" id="CP001391">
    <property type="protein sequence ID" value="ACN95974.1"/>
    <property type="molecule type" value="Genomic_DNA"/>
</dbReference>
<dbReference type="RefSeq" id="WP_006279574.1">
    <property type="nucleotide sequence ID" value="NZ_MKIF01000108.1"/>
</dbReference>
<dbReference type="SMR" id="C0R4Y2"/>
<dbReference type="STRING" id="66084.WRi_012960"/>
<dbReference type="KEGG" id="wri:WRi_012960"/>
<dbReference type="HOGENOM" id="CLU_055737_7_3_5"/>
<dbReference type="Proteomes" id="UP000001293">
    <property type="component" value="Chromosome"/>
</dbReference>
<dbReference type="GO" id="GO:0005886">
    <property type="term" value="C:plasma membrane"/>
    <property type="evidence" value="ECO:0007669"/>
    <property type="project" value="UniProtKB-SubCell"/>
</dbReference>
<dbReference type="GO" id="GO:0045271">
    <property type="term" value="C:respiratory chain complex I"/>
    <property type="evidence" value="ECO:0007669"/>
    <property type="project" value="TreeGrafter"/>
</dbReference>
<dbReference type="GO" id="GO:0051539">
    <property type="term" value="F:4 iron, 4 sulfur cluster binding"/>
    <property type="evidence" value="ECO:0007669"/>
    <property type="project" value="UniProtKB-KW"/>
</dbReference>
<dbReference type="GO" id="GO:0005506">
    <property type="term" value="F:iron ion binding"/>
    <property type="evidence" value="ECO:0007669"/>
    <property type="project" value="UniProtKB-UniRule"/>
</dbReference>
<dbReference type="GO" id="GO:0008137">
    <property type="term" value="F:NADH dehydrogenase (ubiquinone) activity"/>
    <property type="evidence" value="ECO:0007669"/>
    <property type="project" value="InterPro"/>
</dbReference>
<dbReference type="GO" id="GO:0050136">
    <property type="term" value="F:NADH:ubiquinone reductase (non-electrogenic) activity"/>
    <property type="evidence" value="ECO:0007669"/>
    <property type="project" value="UniProtKB-UniRule"/>
</dbReference>
<dbReference type="GO" id="GO:0048038">
    <property type="term" value="F:quinone binding"/>
    <property type="evidence" value="ECO:0007669"/>
    <property type="project" value="UniProtKB-KW"/>
</dbReference>
<dbReference type="GO" id="GO:0009060">
    <property type="term" value="P:aerobic respiration"/>
    <property type="evidence" value="ECO:0007669"/>
    <property type="project" value="TreeGrafter"/>
</dbReference>
<dbReference type="GO" id="GO:0015990">
    <property type="term" value="P:electron transport coupled proton transport"/>
    <property type="evidence" value="ECO:0007669"/>
    <property type="project" value="TreeGrafter"/>
</dbReference>
<dbReference type="FunFam" id="3.40.50.12280:FF:000001">
    <property type="entry name" value="NADH-quinone oxidoreductase subunit B 2"/>
    <property type="match status" value="1"/>
</dbReference>
<dbReference type="Gene3D" id="3.40.50.12280">
    <property type="match status" value="1"/>
</dbReference>
<dbReference type="HAMAP" id="MF_01356">
    <property type="entry name" value="NDH1_NuoB"/>
    <property type="match status" value="1"/>
</dbReference>
<dbReference type="InterPro" id="IPR006137">
    <property type="entry name" value="NADH_UbQ_OxRdtase-like_20kDa"/>
</dbReference>
<dbReference type="InterPro" id="IPR006138">
    <property type="entry name" value="NADH_UQ_OxRdtase_20Kd_su"/>
</dbReference>
<dbReference type="NCBIfam" id="TIGR01957">
    <property type="entry name" value="nuoB_fam"/>
    <property type="match status" value="1"/>
</dbReference>
<dbReference type="NCBIfam" id="NF005012">
    <property type="entry name" value="PRK06411.1"/>
    <property type="match status" value="1"/>
</dbReference>
<dbReference type="PANTHER" id="PTHR11995">
    <property type="entry name" value="NADH DEHYDROGENASE"/>
    <property type="match status" value="1"/>
</dbReference>
<dbReference type="PANTHER" id="PTHR11995:SF14">
    <property type="entry name" value="NADH DEHYDROGENASE [UBIQUINONE] IRON-SULFUR PROTEIN 7, MITOCHONDRIAL"/>
    <property type="match status" value="1"/>
</dbReference>
<dbReference type="Pfam" id="PF01058">
    <property type="entry name" value="Oxidored_q6"/>
    <property type="match status" value="1"/>
</dbReference>
<dbReference type="SUPFAM" id="SSF56770">
    <property type="entry name" value="HydA/Nqo6-like"/>
    <property type="match status" value="1"/>
</dbReference>
<dbReference type="PROSITE" id="PS01150">
    <property type="entry name" value="COMPLEX1_20K"/>
    <property type="match status" value="1"/>
</dbReference>
<accession>C0R4Y2</accession>
<reference key="1">
    <citation type="journal article" date="2009" name="Proc. Natl. Acad. Sci. U.S.A.">
        <title>The mosaic genome structure of the Wolbachia wRi strain infecting Drosophila simulans.</title>
        <authorList>
            <person name="Klasson L."/>
            <person name="Westberg J."/>
            <person name="Sapountzis P."/>
            <person name="Naeslund K."/>
            <person name="Lutnaes Y."/>
            <person name="Darby A.C."/>
            <person name="Veneti Z."/>
            <person name="Chen L."/>
            <person name="Braig H.R."/>
            <person name="Garrett R."/>
            <person name="Bourtzis K."/>
            <person name="Andersson S.G."/>
        </authorList>
    </citation>
    <scope>NUCLEOTIDE SEQUENCE [LARGE SCALE GENOMIC DNA]</scope>
    <source>
        <strain>wRi</strain>
    </source>
</reference>
<feature type="chain" id="PRO_1000166666" description="NADH-quinone oxidoreductase subunit B">
    <location>
        <begin position="1"/>
        <end position="168"/>
    </location>
</feature>
<feature type="binding site" evidence="1">
    <location>
        <position position="49"/>
    </location>
    <ligand>
        <name>[4Fe-4S] cluster</name>
        <dbReference type="ChEBI" id="CHEBI:49883"/>
    </ligand>
</feature>
<feature type="binding site" evidence="1">
    <location>
        <position position="50"/>
    </location>
    <ligand>
        <name>[4Fe-4S] cluster</name>
        <dbReference type="ChEBI" id="CHEBI:49883"/>
    </ligand>
</feature>
<feature type="binding site" evidence="1">
    <location>
        <position position="114"/>
    </location>
    <ligand>
        <name>[4Fe-4S] cluster</name>
        <dbReference type="ChEBI" id="CHEBI:49883"/>
    </ligand>
</feature>
<feature type="binding site" evidence="1">
    <location>
        <position position="144"/>
    </location>
    <ligand>
        <name>[4Fe-4S] cluster</name>
        <dbReference type="ChEBI" id="CHEBI:49883"/>
    </ligand>
</feature>